<feature type="chain" id="PRO_1000046480" description="Phosphoribosylformylglycinamidine cyclo-ligase">
    <location>
        <begin position="1"/>
        <end position="344"/>
    </location>
</feature>
<sequence length="344" mass="35946">MDYKSAGVDVEAGRHFVERIRTSVEATHRPEVLGGLGGFGGLCRLPAGLEKPLLVAGTDGVGTKLELAQECGRHHGVGIDLVAMCANDVITCGAEPLFFLDYIATGKLSPAAMAEVVEGIASGCSQSGCSLLGGETAEMPGFYPAGRYDLAGFCVAVVDEPRLIDGQTIQAGDQLLAIASSGVHSNGFSLVRRILEANQVPLETSQAALGGRSAAEALLEPTLLYAPLVKALLQSPELELRGMAHITGGGLPENLPRPLPQGLAAQIDPGSWQRPALFHWLQELGSVPERDLWHTFNLGIGYVLVLPESSCQQALEVVHNSGFTGWICGEIVVGQGVLGLPAGA</sequence>
<comment type="catalytic activity">
    <reaction evidence="1">
        <text>2-formamido-N(1)-(5-O-phospho-beta-D-ribosyl)acetamidine + ATP = 5-amino-1-(5-phospho-beta-D-ribosyl)imidazole + ADP + phosphate + H(+)</text>
        <dbReference type="Rhea" id="RHEA:23032"/>
        <dbReference type="ChEBI" id="CHEBI:15378"/>
        <dbReference type="ChEBI" id="CHEBI:30616"/>
        <dbReference type="ChEBI" id="CHEBI:43474"/>
        <dbReference type="ChEBI" id="CHEBI:137981"/>
        <dbReference type="ChEBI" id="CHEBI:147287"/>
        <dbReference type="ChEBI" id="CHEBI:456216"/>
        <dbReference type="EC" id="6.3.3.1"/>
    </reaction>
</comment>
<comment type="pathway">
    <text evidence="1">Purine metabolism; IMP biosynthesis via de novo pathway; 5-amino-1-(5-phospho-D-ribosyl)imidazole from N(2)-formyl-N(1)-(5-phospho-D-ribosyl)glycinamide: step 2/2.</text>
</comment>
<comment type="subcellular location">
    <subcellularLocation>
        <location evidence="1">Cytoplasm</location>
    </subcellularLocation>
</comment>
<comment type="similarity">
    <text evidence="1">Belongs to the AIR synthase family.</text>
</comment>
<keyword id="KW-0067">ATP-binding</keyword>
<keyword id="KW-0963">Cytoplasm</keyword>
<keyword id="KW-0436">Ligase</keyword>
<keyword id="KW-0547">Nucleotide-binding</keyword>
<keyword id="KW-0658">Purine biosynthesis</keyword>
<keyword id="KW-1185">Reference proteome</keyword>
<name>PUR5_SYNR3</name>
<reference key="1">
    <citation type="submission" date="2006-05" db="EMBL/GenBank/DDBJ databases">
        <authorList>
            <consortium name="Genoscope"/>
        </authorList>
    </citation>
    <scope>NUCLEOTIDE SEQUENCE [LARGE SCALE GENOMIC DNA]</scope>
    <source>
        <strain>RCC307</strain>
    </source>
</reference>
<proteinExistence type="inferred from homology"/>
<protein>
    <recommendedName>
        <fullName evidence="1">Phosphoribosylformylglycinamidine cyclo-ligase</fullName>
        <ecNumber evidence="1">6.3.3.1</ecNumber>
    </recommendedName>
    <alternativeName>
        <fullName evidence="1">AIR synthase</fullName>
    </alternativeName>
    <alternativeName>
        <fullName evidence="1">AIRS</fullName>
    </alternativeName>
    <alternativeName>
        <fullName evidence="1">Phosphoribosyl-aminoimidazole synthetase</fullName>
    </alternativeName>
</protein>
<evidence type="ECO:0000255" key="1">
    <source>
        <dbReference type="HAMAP-Rule" id="MF_00741"/>
    </source>
</evidence>
<organism>
    <name type="scientific">Synechococcus sp. (strain RCC307)</name>
    <dbReference type="NCBI Taxonomy" id="316278"/>
    <lineage>
        <taxon>Bacteria</taxon>
        <taxon>Bacillati</taxon>
        <taxon>Cyanobacteriota</taxon>
        <taxon>Cyanophyceae</taxon>
        <taxon>Synechococcales</taxon>
        <taxon>Synechococcaceae</taxon>
        <taxon>Synechococcus</taxon>
    </lineage>
</organism>
<gene>
    <name evidence="1" type="primary">purM</name>
    <name type="ordered locus">SynRCC307_2071</name>
</gene>
<dbReference type="EC" id="6.3.3.1" evidence="1"/>
<dbReference type="EMBL" id="CT978603">
    <property type="protein sequence ID" value="CAK28974.1"/>
    <property type="molecule type" value="Genomic_DNA"/>
</dbReference>
<dbReference type="SMR" id="A5GVR5"/>
<dbReference type="STRING" id="316278.SynRCC307_2071"/>
<dbReference type="KEGG" id="syr:SynRCC307_2071"/>
<dbReference type="eggNOG" id="COG0150">
    <property type="taxonomic scope" value="Bacteria"/>
</dbReference>
<dbReference type="HOGENOM" id="CLU_047116_0_0_3"/>
<dbReference type="OrthoDB" id="9802507at2"/>
<dbReference type="UniPathway" id="UPA00074">
    <property type="reaction ID" value="UER00129"/>
</dbReference>
<dbReference type="Proteomes" id="UP000001115">
    <property type="component" value="Chromosome"/>
</dbReference>
<dbReference type="GO" id="GO:0005829">
    <property type="term" value="C:cytosol"/>
    <property type="evidence" value="ECO:0007669"/>
    <property type="project" value="TreeGrafter"/>
</dbReference>
<dbReference type="GO" id="GO:0005524">
    <property type="term" value="F:ATP binding"/>
    <property type="evidence" value="ECO:0007669"/>
    <property type="project" value="UniProtKB-KW"/>
</dbReference>
<dbReference type="GO" id="GO:0004637">
    <property type="term" value="F:phosphoribosylamine-glycine ligase activity"/>
    <property type="evidence" value="ECO:0007669"/>
    <property type="project" value="TreeGrafter"/>
</dbReference>
<dbReference type="GO" id="GO:0004641">
    <property type="term" value="F:phosphoribosylformylglycinamidine cyclo-ligase activity"/>
    <property type="evidence" value="ECO:0007669"/>
    <property type="project" value="UniProtKB-UniRule"/>
</dbReference>
<dbReference type="GO" id="GO:0006189">
    <property type="term" value="P:'de novo' IMP biosynthetic process"/>
    <property type="evidence" value="ECO:0007669"/>
    <property type="project" value="UniProtKB-UniRule"/>
</dbReference>
<dbReference type="GO" id="GO:0046084">
    <property type="term" value="P:adenine biosynthetic process"/>
    <property type="evidence" value="ECO:0007669"/>
    <property type="project" value="TreeGrafter"/>
</dbReference>
<dbReference type="CDD" id="cd02196">
    <property type="entry name" value="PurM"/>
    <property type="match status" value="1"/>
</dbReference>
<dbReference type="FunFam" id="3.30.1330.10:FF:000001">
    <property type="entry name" value="Phosphoribosylformylglycinamidine cyclo-ligase"/>
    <property type="match status" value="1"/>
</dbReference>
<dbReference type="FunFam" id="3.90.650.10:FF:000011">
    <property type="entry name" value="Phosphoribosylformylglycinamidine cyclo-ligase"/>
    <property type="match status" value="1"/>
</dbReference>
<dbReference type="Gene3D" id="3.90.650.10">
    <property type="entry name" value="PurM-like C-terminal domain"/>
    <property type="match status" value="1"/>
</dbReference>
<dbReference type="Gene3D" id="3.30.1330.10">
    <property type="entry name" value="PurM-like, N-terminal domain"/>
    <property type="match status" value="1"/>
</dbReference>
<dbReference type="HAMAP" id="MF_00741">
    <property type="entry name" value="AIRS"/>
    <property type="match status" value="1"/>
</dbReference>
<dbReference type="InterPro" id="IPR010918">
    <property type="entry name" value="PurM-like_C_dom"/>
</dbReference>
<dbReference type="InterPro" id="IPR036676">
    <property type="entry name" value="PurM-like_C_sf"/>
</dbReference>
<dbReference type="InterPro" id="IPR016188">
    <property type="entry name" value="PurM-like_N"/>
</dbReference>
<dbReference type="InterPro" id="IPR036921">
    <property type="entry name" value="PurM-like_N_sf"/>
</dbReference>
<dbReference type="InterPro" id="IPR004733">
    <property type="entry name" value="PurM_cligase"/>
</dbReference>
<dbReference type="NCBIfam" id="TIGR00878">
    <property type="entry name" value="purM"/>
    <property type="match status" value="1"/>
</dbReference>
<dbReference type="PANTHER" id="PTHR10520:SF12">
    <property type="entry name" value="TRIFUNCTIONAL PURINE BIOSYNTHETIC PROTEIN ADENOSINE-3"/>
    <property type="match status" value="1"/>
</dbReference>
<dbReference type="PANTHER" id="PTHR10520">
    <property type="entry name" value="TRIFUNCTIONAL PURINE BIOSYNTHETIC PROTEIN ADENOSINE-3-RELATED"/>
    <property type="match status" value="1"/>
</dbReference>
<dbReference type="Pfam" id="PF00586">
    <property type="entry name" value="AIRS"/>
    <property type="match status" value="1"/>
</dbReference>
<dbReference type="Pfam" id="PF02769">
    <property type="entry name" value="AIRS_C"/>
    <property type="match status" value="1"/>
</dbReference>
<dbReference type="SUPFAM" id="SSF56042">
    <property type="entry name" value="PurM C-terminal domain-like"/>
    <property type="match status" value="1"/>
</dbReference>
<dbReference type="SUPFAM" id="SSF55326">
    <property type="entry name" value="PurM N-terminal domain-like"/>
    <property type="match status" value="1"/>
</dbReference>
<accession>A5GVR5</accession>